<accession>O08371</accession>
<name>SUCD_RICPR</name>
<reference key="1">
    <citation type="journal article" date="1997" name="Microbiology">
        <title>Genomic rearrangements during evolution of the obligate intracellular parasite Rickettsia prowazekii as inferred from an analysis of 52015 bp nucleotide sequence.</title>
        <authorList>
            <person name="Andersson J.O."/>
            <person name="Andersson S.G.E."/>
        </authorList>
    </citation>
    <scope>NUCLEOTIDE SEQUENCE [GENOMIC DNA]</scope>
    <source>
        <strain>Madrid E</strain>
    </source>
</reference>
<reference key="2">
    <citation type="journal article" date="1998" name="Nature">
        <title>The genome sequence of Rickettsia prowazekii and the origin of mitochondria.</title>
        <authorList>
            <person name="Andersson S.G.E."/>
            <person name="Zomorodipour A."/>
            <person name="Andersson J.O."/>
            <person name="Sicheritz-Ponten T."/>
            <person name="Alsmark U.C.M."/>
            <person name="Podowski R.M."/>
            <person name="Naeslund A.K."/>
            <person name="Eriksson A.-S."/>
            <person name="Winkler H.H."/>
            <person name="Kurland C.G."/>
        </authorList>
    </citation>
    <scope>NUCLEOTIDE SEQUENCE [LARGE SCALE GENOMIC DNA]</scope>
    <source>
        <strain>Madrid E</strain>
    </source>
</reference>
<gene>
    <name evidence="1" type="primary">sucD</name>
    <name type="ordered locus">RP432</name>
</gene>
<comment type="function">
    <text evidence="1">Succinyl-CoA synthetase functions in the citric acid cycle (TCA), coupling the hydrolysis of succinyl-CoA to the synthesis of either ATP or GTP and thus represents the only step of substrate-level phosphorylation in the TCA. The alpha subunit of the enzyme binds the substrates coenzyme A and phosphate, while succinate binding and nucleotide specificity is provided by the beta subunit.</text>
</comment>
<comment type="catalytic activity">
    <reaction evidence="1">
        <text>succinate + ATP + CoA = succinyl-CoA + ADP + phosphate</text>
        <dbReference type="Rhea" id="RHEA:17661"/>
        <dbReference type="ChEBI" id="CHEBI:30031"/>
        <dbReference type="ChEBI" id="CHEBI:30616"/>
        <dbReference type="ChEBI" id="CHEBI:43474"/>
        <dbReference type="ChEBI" id="CHEBI:57287"/>
        <dbReference type="ChEBI" id="CHEBI:57292"/>
        <dbReference type="ChEBI" id="CHEBI:456216"/>
        <dbReference type="EC" id="6.2.1.5"/>
    </reaction>
    <physiologicalReaction direction="right-to-left" evidence="1">
        <dbReference type="Rhea" id="RHEA:17663"/>
    </physiologicalReaction>
</comment>
<comment type="catalytic activity">
    <reaction evidence="1">
        <text>GTP + succinate + CoA = succinyl-CoA + GDP + phosphate</text>
        <dbReference type="Rhea" id="RHEA:22120"/>
        <dbReference type="ChEBI" id="CHEBI:30031"/>
        <dbReference type="ChEBI" id="CHEBI:37565"/>
        <dbReference type="ChEBI" id="CHEBI:43474"/>
        <dbReference type="ChEBI" id="CHEBI:57287"/>
        <dbReference type="ChEBI" id="CHEBI:57292"/>
        <dbReference type="ChEBI" id="CHEBI:58189"/>
    </reaction>
    <physiologicalReaction direction="right-to-left" evidence="1">
        <dbReference type="Rhea" id="RHEA:22122"/>
    </physiologicalReaction>
</comment>
<comment type="pathway">
    <text evidence="1">Carbohydrate metabolism; tricarboxylic acid cycle; succinate from succinyl-CoA (ligase route): step 1/1.</text>
</comment>
<comment type="subunit">
    <text evidence="1">Heterotetramer of two alpha and two beta subunits.</text>
</comment>
<comment type="similarity">
    <text evidence="1">Belongs to the succinate/malate CoA ligase alpha subunit family.</text>
</comment>
<evidence type="ECO:0000255" key="1">
    <source>
        <dbReference type="HAMAP-Rule" id="MF_01988"/>
    </source>
</evidence>
<organism>
    <name type="scientific">Rickettsia prowazekii (strain Madrid E)</name>
    <dbReference type="NCBI Taxonomy" id="272947"/>
    <lineage>
        <taxon>Bacteria</taxon>
        <taxon>Pseudomonadati</taxon>
        <taxon>Pseudomonadota</taxon>
        <taxon>Alphaproteobacteria</taxon>
        <taxon>Rickettsiales</taxon>
        <taxon>Rickettsiaceae</taxon>
        <taxon>Rickettsieae</taxon>
        <taxon>Rickettsia</taxon>
        <taxon>typhus group</taxon>
    </lineage>
</organism>
<sequence length="292" mass="30176">MAILINKKTKVICQGFTGSQGTFHSEQAIAYGTNMVGGVTPGKGGHTHLNLPVYNTVHEAKAKTGANASVIYVPPGFAADSILEAIDAKIEVVVCITEGIPVLDMIKVKRALIGSKTRLIGPNCPGVITPGECKIGIMPGHIHKIGDIGIVSRSGTLTYEAVAQTTAAGLGQSTCVGIGGDPVNGTSFVDCIEMFLQDDETKAIIMIGEIGGSAEEDAADFIKQSKIKKPIVSFIAGITAPADKRMGHAGAIISGGKGSAEDKVEVLQSAGVIITRSPADIGKTMLDLLNKI</sequence>
<protein>
    <recommendedName>
        <fullName evidence="1">Succinate--CoA ligase [ADP-forming] subunit alpha</fullName>
        <ecNumber evidence="1">6.2.1.5</ecNumber>
    </recommendedName>
    <alternativeName>
        <fullName evidence="1">Succinyl-CoA synthetase subunit alpha</fullName>
        <shortName evidence="1">SCS-alpha</shortName>
    </alternativeName>
</protein>
<proteinExistence type="inferred from homology"/>
<keyword id="KW-0436">Ligase</keyword>
<keyword id="KW-0547">Nucleotide-binding</keyword>
<keyword id="KW-1185">Reference proteome</keyword>
<keyword id="KW-0816">Tricarboxylic acid cycle</keyword>
<dbReference type="EC" id="6.2.1.5" evidence="1"/>
<dbReference type="EMBL" id="Y11777">
    <property type="protein sequence ID" value="CAA72446.1"/>
    <property type="molecule type" value="Genomic_DNA"/>
</dbReference>
<dbReference type="EMBL" id="AJ235271">
    <property type="protein sequence ID" value="CAA14889.1"/>
    <property type="molecule type" value="Genomic_DNA"/>
</dbReference>
<dbReference type="PIR" id="G71701">
    <property type="entry name" value="G71701"/>
</dbReference>
<dbReference type="RefSeq" id="NP_220813.1">
    <property type="nucleotide sequence ID" value="NC_000963.1"/>
</dbReference>
<dbReference type="RefSeq" id="WP_004597642.1">
    <property type="nucleotide sequence ID" value="NC_000963.1"/>
</dbReference>
<dbReference type="SMR" id="O08371"/>
<dbReference type="STRING" id="272947.gene:17555512"/>
<dbReference type="EnsemblBacteria" id="CAA14889">
    <property type="protein sequence ID" value="CAA14889"/>
    <property type="gene ID" value="CAA14889"/>
</dbReference>
<dbReference type="GeneID" id="57569557"/>
<dbReference type="KEGG" id="rpr:RP432"/>
<dbReference type="PATRIC" id="fig|272947.5.peg.445"/>
<dbReference type="eggNOG" id="COG0074">
    <property type="taxonomic scope" value="Bacteria"/>
</dbReference>
<dbReference type="HOGENOM" id="CLU_052104_0_0_5"/>
<dbReference type="OrthoDB" id="9807196at2"/>
<dbReference type="UniPathway" id="UPA00223">
    <property type="reaction ID" value="UER00999"/>
</dbReference>
<dbReference type="Proteomes" id="UP000002480">
    <property type="component" value="Chromosome"/>
</dbReference>
<dbReference type="GO" id="GO:0009361">
    <property type="term" value="C:succinate-CoA ligase complex (ADP-forming)"/>
    <property type="evidence" value="ECO:0007669"/>
    <property type="project" value="TreeGrafter"/>
</dbReference>
<dbReference type="GO" id="GO:0000166">
    <property type="term" value="F:nucleotide binding"/>
    <property type="evidence" value="ECO:0007669"/>
    <property type="project" value="UniProtKB-KW"/>
</dbReference>
<dbReference type="GO" id="GO:0004775">
    <property type="term" value="F:succinate-CoA ligase (ADP-forming) activity"/>
    <property type="evidence" value="ECO:0007669"/>
    <property type="project" value="UniProtKB-UniRule"/>
</dbReference>
<dbReference type="GO" id="GO:0004776">
    <property type="term" value="F:succinate-CoA ligase (GDP-forming) activity"/>
    <property type="evidence" value="ECO:0007669"/>
    <property type="project" value="TreeGrafter"/>
</dbReference>
<dbReference type="GO" id="GO:0006099">
    <property type="term" value="P:tricarboxylic acid cycle"/>
    <property type="evidence" value="ECO:0007669"/>
    <property type="project" value="UniProtKB-UniRule"/>
</dbReference>
<dbReference type="FunFam" id="3.40.50.720:FF:000002">
    <property type="entry name" value="Succinate--CoA ligase [ADP-forming] subunit alpha"/>
    <property type="match status" value="1"/>
</dbReference>
<dbReference type="FunFam" id="3.40.50.261:FF:000005">
    <property type="entry name" value="Succinate--CoA ligase [ADP-forming] subunit alpha, mitochondrial"/>
    <property type="match status" value="1"/>
</dbReference>
<dbReference type="Gene3D" id="3.40.50.720">
    <property type="entry name" value="NAD(P)-binding Rossmann-like Domain"/>
    <property type="match status" value="1"/>
</dbReference>
<dbReference type="Gene3D" id="3.40.50.261">
    <property type="entry name" value="Succinyl-CoA synthetase domains"/>
    <property type="match status" value="1"/>
</dbReference>
<dbReference type="HAMAP" id="MF_01988">
    <property type="entry name" value="Succ_CoA_alpha"/>
    <property type="match status" value="1"/>
</dbReference>
<dbReference type="InterPro" id="IPR017440">
    <property type="entry name" value="Cit_synth/succinyl-CoA_lig_AS"/>
</dbReference>
<dbReference type="InterPro" id="IPR033847">
    <property type="entry name" value="Citrt_syn/SCS-alpha_CS"/>
</dbReference>
<dbReference type="InterPro" id="IPR003781">
    <property type="entry name" value="CoA-bd"/>
</dbReference>
<dbReference type="InterPro" id="IPR005810">
    <property type="entry name" value="CoA_lig_alpha"/>
</dbReference>
<dbReference type="InterPro" id="IPR036291">
    <property type="entry name" value="NAD(P)-bd_dom_sf"/>
</dbReference>
<dbReference type="InterPro" id="IPR005811">
    <property type="entry name" value="SUCC_ACL_C"/>
</dbReference>
<dbReference type="InterPro" id="IPR016102">
    <property type="entry name" value="Succinyl-CoA_synth-like"/>
</dbReference>
<dbReference type="NCBIfam" id="NF004230">
    <property type="entry name" value="PRK05678.1"/>
    <property type="match status" value="1"/>
</dbReference>
<dbReference type="NCBIfam" id="TIGR01019">
    <property type="entry name" value="sucCoAalpha"/>
    <property type="match status" value="1"/>
</dbReference>
<dbReference type="PANTHER" id="PTHR11117:SF2">
    <property type="entry name" value="SUCCINATE--COA LIGASE [ADP_GDP-FORMING] SUBUNIT ALPHA, MITOCHONDRIAL"/>
    <property type="match status" value="1"/>
</dbReference>
<dbReference type="PANTHER" id="PTHR11117">
    <property type="entry name" value="SUCCINYL-COA LIGASE SUBUNIT ALPHA"/>
    <property type="match status" value="1"/>
</dbReference>
<dbReference type="Pfam" id="PF02629">
    <property type="entry name" value="CoA_binding"/>
    <property type="match status" value="1"/>
</dbReference>
<dbReference type="Pfam" id="PF00549">
    <property type="entry name" value="Ligase_CoA"/>
    <property type="match status" value="1"/>
</dbReference>
<dbReference type="PIRSF" id="PIRSF001553">
    <property type="entry name" value="SucCS_alpha"/>
    <property type="match status" value="1"/>
</dbReference>
<dbReference type="PRINTS" id="PR01798">
    <property type="entry name" value="SCOASYNTHASE"/>
</dbReference>
<dbReference type="SMART" id="SM00881">
    <property type="entry name" value="CoA_binding"/>
    <property type="match status" value="1"/>
</dbReference>
<dbReference type="SUPFAM" id="SSF51735">
    <property type="entry name" value="NAD(P)-binding Rossmann-fold domains"/>
    <property type="match status" value="1"/>
</dbReference>
<dbReference type="SUPFAM" id="SSF52210">
    <property type="entry name" value="Succinyl-CoA synthetase domains"/>
    <property type="match status" value="1"/>
</dbReference>
<dbReference type="PROSITE" id="PS01216">
    <property type="entry name" value="SUCCINYL_COA_LIG_1"/>
    <property type="match status" value="1"/>
</dbReference>
<dbReference type="PROSITE" id="PS00399">
    <property type="entry name" value="SUCCINYL_COA_LIG_2"/>
    <property type="match status" value="1"/>
</dbReference>
<feature type="chain" id="PRO_0000102798" description="Succinate--CoA ligase [ADP-forming] subunit alpha">
    <location>
        <begin position="1"/>
        <end position="292"/>
    </location>
</feature>
<feature type="active site" description="Tele-phosphohistidine intermediate" evidence="1">
    <location>
        <position position="248"/>
    </location>
</feature>
<feature type="binding site" evidence="1">
    <location>
        <begin position="17"/>
        <end position="20"/>
    </location>
    <ligand>
        <name>CoA</name>
        <dbReference type="ChEBI" id="CHEBI:57287"/>
    </ligand>
</feature>
<feature type="binding site" evidence="1">
    <location>
        <position position="43"/>
    </location>
    <ligand>
        <name>CoA</name>
        <dbReference type="ChEBI" id="CHEBI:57287"/>
    </ligand>
</feature>
<feature type="binding site" evidence="1">
    <location>
        <begin position="96"/>
        <end position="98"/>
    </location>
    <ligand>
        <name>CoA</name>
        <dbReference type="ChEBI" id="CHEBI:57287"/>
    </ligand>
</feature>
<feature type="binding site" evidence="1">
    <location>
        <position position="159"/>
    </location>
    <ligand>
        <name>substrate</name>
        <note>ligand shared with subunit beta</note>
    </ligand>
</feature>